<accession>B1XA53</accession>
<keyword id="KW-0238">DNA-binding</keyword>
<gene>
    <name type="primary">ariR</name>
    <name type="ordered locus">ECDH10B_1215</name>
</gene>
<sequence length="88" mass="9694">MLEDTTIHNAITDKALASYFRSSGNLLEEESAVLGQAVTNLMLSGDNVNNKNIILSLIHSLETTSDILKADVIRKTLEIVLRYTADDM</sequence>
<dbReference type="EMBL" id="CP000948">
    <property type="protein sequence ID" value="ACB02336.1"/>
    <property type="molecule type" value="Genomic_DNA"/>
</dbReference>
<dbReference type="RefSeq" id="WP_000888772.1">
    <property type="nucleotide sequence ID" value="NC_010473.1"/>
</dbReference>
<dbReference type="SMR" id="B1XA53"/>
<dbReference type="GeneID" id="75203729"/>
<dbReference type="KEGG" id="ecd:ECDH10B_1215"/>
<dbReference type="HOGENOM" id="CLU_164045_1_0_6"/>
<dbReference type="GO" id="GO:0003677">
    <property type="term" value="F:DNA binding"/>
    <property type="evidence" value="ECO:0007669"/>
    <property type="project" value="UniProtKB-KW"/>
</dbReference>
<dbReference type="GO" id="GO:0071468">
    <property type="term" value="P:cellular response to acidic pH"/>
    <property type="evidence" value="ECO:0007669"/>
    <property type="project" value="InterPro"/>
</dbReference>
<dbReference type="FunFam" id="1.20.5.5260:FF:000001">
    <property type="entry name" value="Two-component-system connector protein AriR"/>
    <property type="match status" value="1"/>
</dbReference>
<dbReference type="Gene3D" id="1.20.5.5260">
    <property type="match status" value="1"/>
</dbReference>
<dbReference type="InterPro" id="IPR024753">
    <property type="entry name" value="AriR"/>
</dbReference>
<dbReference type="Pfam" id="PF10798">
    <property type="entry name" value="YmgB"/>
    <property type="match status" value="1"/>
</dbReference>
<protein>
    <recommendedName>
        <fullName>Regulatory protein AriR</fullName>
    </recommendedName>
</protein>
<organism>
    <name type="scientific">Escherichia coli (strain K12 / DH10B)</name>
    <dbReference type="NCBI Taxonomy" id="316385"/>
    <lineage>
        <taxon>Bacteria</taxon>
        <taxon>Pseudomonadati</taxon>
        <taxon>Pseudomonadota</taxon>
        <taxon>Gammaproteobacteria</taxon>
        <taxon>Enterobacterales</taxon>
        <taxon>Enterobacteriaceae</taxon>
        <taxon>Escherichia</taxon>
    </lineage>
</organism>
<reference key="1">
    <citation type="journal article" date="2008" name="J. Bacteriol.">
        <title>The complete genome sequence of Escherichia coli DH10B: insights into the biology of a laboratory workhorse.</title>
        <authorList>
            <person name="Durfee T."/>
            <person name="Nelson R."/>
            <person name="Baldwin S."/>
            <person name="Plunkett G. III"/>
            <person name="Burland V."/>
            <person name="Mau B."/>
            <person name="Petrosino J.F."/>
            <person name="Qin X."/>
            <person name="Muzny D.M."/>
            <person name="Ayele M."/>
            <person name="Gibbs R.A."/>
            <person name="Csorgo B."/>
            <person name="Posfai G."/>
            <person name="Weinstock G.M."/>
            <person name="Blattner F.R."/>
        </authorList>
    </citation>
    <scope>NUCLEOTIDE SEQUENCE [LARGE SCALE GENOMIC DNA]</scope>
    <source>
        <strain>K12 / DH10B</strain>
    </source>
</reference>
<feature type="chain" id="PRO_0000350556" description="Regulatory protein AriR">
    <location>
        <begin position="1"/>
        <end position="88"/>
    </location>
</feature>
<comment type="function">
    <text evidence="1">Regulates expression of genes involved in acid-resistance and biofilm formation. May be a non-specific DNA-binding protein that binds genes and/or intergenic regions via a geometric recognition (By similarity).</text>
</comment>
<comment type="subunit">
    <text evidence="1">Homodimer.</text>
</comment>
<comment type="similarity">
    <text evidence="2">Belongs to the AriR family.</text>
</comment>
<evidence type="ECO:0000250" key="1"/>
<evidence type="ECO:0000305" key="2"/>
<proteinExistence type="inferred from homology"/>
<name>ARIR_ECODH</name>